<sequence length="858" mass="97901">MASYTPMIQQYLNIKAEYQDAFLFFRLGDFYEMFFDDAKEASQELEITLTSRDGGTIPMCGVPYHSASAYIEQLISKGYKVAICEQVEDPKTAKGVVKREVVQLITPGTVMEGKGLSENENNFIASVTKFENGYGLALSDLSTGENMAAFIDRLDEVVSEIYSVGAKEIVVSKHLDEETVKTLKERCQATISYEDSDELIDEAERLVSRLSEQLRSTFLTLYAYLRRTQKRSLDHLQQVQVFELEQTMKIDLYSKRNLELTETIRSKSKKGSLLWLLDETKTAMGGRLLKQWIDRPLIRLSHIKERQEMVQILMDHFFEREDLRERLKQVYDLERLAGRVAFGNVNARDLIQLKESLKQVPAIKELVHSLPEEMAKSRANDIDLCDDLLNLLEDALYENPPMTLKEGNLIKDGYNAKLDEYRDASRNGKDWIARLEQQEREYTGIRSLKVGFNKVFGYYIEVTRANTHLLEEGRYERKQTLANAERYITPELKEKEALILEAESNISELEYELFAALREQVKVYIPRLQLLAKQMSELDALQCFATVSEKRRYIRPEFSEDEVDVIDGRHPVVEKVMDHQEYVPNDCHMGNGRQTLLITGPNMSGKSTYMRQMALISILAQIGCFVPASKATLPIFDQIFTRIGAADDLISGQSTFMVEMLEAKNAMVHATKNSLILFDEIGRGTSTYDGMALAQAIIEFVHDHVGAKTLFSTHYHELTVLESQLSELKNVHVRAEEHEGTVVFLHQIKEGAADKSYGIHVAQLAELPDAIIDRAQTILTELESGSHEVTPHVSAAPKTEKAEEKQQLSFFEVEEKPQTKPVLKQKDQAVIEELKSFNLMDMTPLEAMTKLYELQKKL</sequence>
<gene>
    <name evidence="1" type="primary">mutS</name>
    <name type="ordered locus">BPUM_1608</name>
</gene>
<organism>
    <name type="scientific">Bacillus pumilus (strain SAFR-032)</name>
    <dbReference type="NCBI Taxonomy" id="315750"/>
    <lineage>
        <taxon>Bacteria</taxon>
        <taxon>Bacillati</taxon>
        <taxon>Bacillota</taxon>
        <taxon>Bacilli</taxon>
        <taxon>Bacillales</taxon>
        <taxon>Bacillaceae</taxon>
        <taxon>Bacillus</taxon>
    </lineage>
</organism>
<accession>A8FDH3</accession>
<keyword id="KW-0067">ATP-binding</keyword>
<keyword id="KW-0227">DNA damage</keyword>
<keyword id="KW-0234">DNA repair</keyword>
<keyword id="KW-0238">DNA-binding</keyword>
<keyword id="KW-0547">Nucleotide-binding</keyword>
<dbReference type="EMBL" id="CP000813">
    <property type="protein sequence ID" value="ABV62290.1"/>
    <property type="molecule type" value="Genomic_DNA"/>
</dbReference>
<dbReference type="RefSeq" id="WP_012010027.1">
    <property type="nucleotide sequence ID" value="NC_009848.4"/>
</dbReference>
<dbReference type="SMR" id="A8FDH3"/>
<dbReference type="STRING" id="315750.BPUM_1608"/>
<dbReference type="GeneID" id="5620870"/>
<dbReference type="KEGG" id="bpu:BPUM_1608"/>
<dbReference type="eggNOG" id="COG0249">
    <property type="taxonomic scope" value="Bacteria"/>
</dbReference>
<dbReference type="HOGENOM" id="CLU_002472_3_1_9"/>
<dbReference type="OrthoDB" id="9802448at2"/>
<dbReference type="Proteomes" id="UP000001355">
    <property type="component" value="Chromosome"/>
</dbReference>
<dbReference type="GO" id="GO:0005829">
    <property type="term" value="C:cytosol"/>
    <property type="evidence" value="ECO:0007669"/>
    <property type="project" value="TreeGrafter"/>
</dbReference>
<dbReference type="GO" id="GO:0005524">
    <property type="term" value="F:ATP binding"/>
    <property type="evidence" value="ECO:0007669"/>
    <property type="project" value="UniProtKB-UniRule"/>
</dbReference>
<dbReference type="GO" id="GO:0140664">
    <property type="term" value="F:ATP-dependent DNA damage sensor activity"/>
    <property type="evidence" value="ECO:0007669"/>
    <property type="project" value="InterPro"/>
</dbReference>
<dbReference type="GO" id="GO:0003684">
    <property type="term" value="F:damaged DNA binding"/>
    <property type="evidence" value="ECO:0007669"/>
    <property type="project" value="UniProtKB-UniRule"/>
</dbReference>
<dbReference type="GO" id="GO:0030983">
    <property type="term" value="F:mismatched DNA binding"/>
    <property type="evidence" value="ECO:0007669"/>
    <property type="project" value="InterPro"/>
</dbReference>
<dbReference type="GO" id="GO:0006298">
    <property type="term" value="P:mismatch repair"/>
    <property type="evidence" value="ECO:0007669"/>
    <property type="project" value="UniProtKB-UniRule"/>
</dbReference>
<dbReference type="CDD" id="cd03284">
    <property type="entry name" value="ABC_MutS1"/>
    <property type="match status" value="1"/>
</dbReference>
<dbReference type="FunFam" id="1.10.1420.10:FF:000007">
    <property type="entry name" value="DNA mismatch repair protein MutS"/>
    <property type="match status" value="1"/>
</dbReference>
<dbReference type="FunFam" id="3.40.1170.10:FF:000001">
    <property type="entry name" value="DNA mismatch repair protein MutS"/>
    <property type="match status" value="1"/>
</dbReference>
<dbReference type="FunFam" id="3.40.50.300:FF:000896">
    <property type="entry name" value="DNA mismatch repair protein MutS"/>
    <property type="match status" value="1"/>
</dbReference>
<dbReference type="Gene3D" id="1.10.1420.10">
    <property type="match status" value="2"/>
</dbReference>
<dbReference type="Gene3D" id="3.40.1170.10">
    <property type="entry name" value="DNA repair protein MutS, domain I"/>
    <property type="match status" value="1"/>
</dbReference>
<dbReference type="Gene3D" id="3.30.420.110">
    <property type="entry name" value="MutS, connector domain"/>
    <property type="match status" value="1"/>
</dbReference>
<dbReference type="Gene3D" id="3.40.50.300">
    <property type="entry name" value="P-loop containing nucleotide triphosphate hydrolases"/>
    <property type="match status" value="1"/>
</dbReference>
<dbReference type="HAMAP" id="MF_00096">
    <property type="entry name" value="MutS"/>
    <property type="match status" value="1"/>
</dbReference>
<dbReference type="InterPro" id="IPR005748">
    <property type="entry name" value="DNA_mismatch_repair_MutS"/>
</dbReference>
<dbReference type="InterPro" id="IPR007695">
    <property type="entry name" value="DNA_mismatch_repair_MutS-lik_N"/>
</dbReference>
<dbReference type="InterPro" id="IPR017261">
    <property type="entry name" value="DNA_mismatch_repair_MutS/MSH"/>
</dbReference>
<dbReference type="InterPro" id="IPR000432">
    <property type="entry name" value="DNA_mismatch_repair_MutS_C"/>
</dbReference>
<dbReference type="InterPro" id="IPR007861">
    <property type="entry name" value="DNA_mismatch_repair_MutS_clamp"/>
</dbReference>
<dbReference type="InterPro" id="IPR007696">
    <property type="entry name" value="DNA_mismatch_repair_MutS_core"/>
</dbReference>
<dbReference type="InterPro" id="IPR016151">
    <property type="entry name" value="DNA_mismatch_repair_MutS_N"/>
</dbReference>
<dbReference type="InterPro" id="IPR036187">
    <property type="entry name" value="DNA_mismatch_repair_MutS_sf"/>
</dbReference>
<dbReference type="InterPro" id="IPR007860">
    <property type="entry name" value="DNA_mmatch_repair_MutS_con_dom"/>
</dbReference>
<dbReference type="InterPro" id="IPR045076">
    <property type="entry name" value="MutS"/>
</dbReference>
<dbReference type="InterPro" id="IPR036678">
    <property type="entry name" value="MutS_con_dom_sf"/>
</dbReference>
<dbReference type="InterPro" id="IPR027417">
    <property type="entry name" value="P-loop_NTPase"/>
</dbReference>
<dbReference type="NCBIfam" id="TIGR01070">
    <property type="entry name" value="mutS1"/>
    <property type="match status" value="1"/>
</dbReference>
<dbReference type="NCBIfam" id="NF003810">
    <property type="entry name" value="PRK05399.1"/>
    <property type="match status" value="1"/>
</dbReference>
<dbReference type="PANTHER" id="PTHR11361:SF34">
    <property type="entry name" value="DNA MISMATCH REPAIR PROTEIN MSH1, MITOCHONDRIAL"/>
    <property type="match status" value="1"/>
</dbReference>
<dbReference type="PANTHER" id="PTHR11361">
    <property type="entry name" value="DNA MISMATCH REPAIR PROTEIN MUTS FAMILY MEMBER"/>
    <property type="match status" value="1"/>
</dbReference>
<dbReference type="Pfam" id="PF01624">
    <property type="entry name" value="MutS_I"/>
    <property type="match status" value="1"/>
</dbReference>
<dbReference type="Pfam" id="PF05188">
    <property type="entry name" value="MutS_II"/>
    <property type="match status" value="1"/>
</dbReference>
<dbReference type="Pfam" id="PF05192">
    <property type="entry name" value="MutS_III"/>
    <property type="match status" value="1"/>
</dbReference>
<dbReference type="Pfam" id="PF05190">
    <property type="entry name" value="MutS_IV"/>
    <property type="match status" value="1"/>
</dbReference>
<dbReference type="Pfam" id="PF00488">
    <property type="entry name" value="MutS_V"/>
    <property type="match status" value="1"/>
</dbReference>
<dbReference type="PIRSF" id="PIRSF037677">
    <property type="entry name" value="DNA_mis_repair_Msh6"/>
    <property type="match status" value="1"/>
</dbReference>
<dbReference type="SMART" id="SM00534">
    <property type="entry name" value="MUTSac"/>
    <property type="match status" value="1"/>
</dbReference>
<dbReference type="SMART" id="SM00533">
    <property type="entry name" value="MUTSd"/>
    <property type="match status" value="1"/>
</dbReference>
<dbReference type="SUPFAM" id="SSF55271">
    <property type="entry name" value="DNA repair protein MutS, domain I"/>
    <property type="match status" value="1"/>
</dbReference>
<dbReference type="SUPFAM" id="SSF53150">
    <property type="entry name" value="DNA repair protein MutS, domain II"/>
    <property type="match status" value="1"/>
</dbReference>
<dbReference type="SUPFAM" id="SSF48334">
    <property type="entry name" value="DNA repair protein MutS, domain III"/>
    <property type="match status" value="1"/>
</dbReference>
<dbReference type="SUPFAM" id="SSF52540">
    <property type="entry name" value="P-loop containing nucleoside triphosphate hydrolases"/>
    <property type="match status" value="1"/>
</dbReference>
<dbReference type="PROSITE" id="PS00486">
    <property type="entry name" value="DNA_MISMATCH_REPAIR_2"/>
    <property type="match status" value="1"/>
</dbReference>
<proteinExistence type="inferred from homology"/>
<name>MUTS_BACP2</name>
<evidence type="ECO:0000255" key="1">
    <source>
        <dbReference type="HAMAP-Rule" id="MF_00096"/>
    </source>
</evidence>
<protein>
    <recommendedName>
        <fullName evidence="1">DNA mismatch repair protein MutS</fullName>
    </recommendedName>
</protein>
<comment type="function">
    <text evidence="1">This protein is involved in the repair of mismatches in DNA. It is possible that it carries out the mismatch recognition step. This protein has a weak ATPase activity.</text>
</comment>
<comment type="similarity">
    <text evidence="1">Belongs to the DNA mismatch repair MutS family.</text>
</comment>
<reference key="1">
    <citation type="journal article" date="2007" name="PLoS ONE">
        <title>Paradoxical DNA repair and peroxide resistance gene conservation in Bacillus pumilus SAFR-032.</title>
        <authorList>
            <person name="Gioia J."/>
            <person name="Yerrapragada S."/>
            <person name="Qin X."/>
            <person name="Jiang H."/>
            <person name="Igboeli O.C."/>
            <person name="Muzny D."/>
            <person name="Dugan-Rocha S."/>
            <person name="Ding Y."/>
            <person name="Hawes A."/>
            <person name="Liu W."/>
            <person name="Perez L."/>
            <person name="Kovar C."/>
            <person name="Dinh H."/>
            <person name="Lee S."/>
            <person name="Nazareth L."/>
            <person name="Blyth P."/>
            <person name="Holder M."/>
            <person name="Buhay C."/>
            <person name="Tirumalai M.R."/>
            <person name="Liu Y."/>
            <person name="Dasgupta I."/>
            <person name="Bokhetache L."/>
            <person name="Fujita M."/>
            <person name="Karouia F."/>
            <person name="Eswara Moorthy P."/>
            <person name="Siefert J."/>
            <person name="Uzman A."/>
            <person name="Buzumbo P."/>
            <person name="Verma A."/>
            <person name="Zwiya H."/>
            <person name="McWilliams B.D."/>
            <person name="Olowu A."/>
            <person name="Clinkenbeard K.D."/>
            <person name="Newcombe D."/>
            <person name="Golebiewski L."/>
            <person name="Petrosino J.F."/>
            <person name="Nicholson W.L."/>
            <person name="Fox G.E."/>
            <person name="Venkateswaran K."/>
            <person name="Highlander S.K."/>
            <person name="Weinstock G.M."/>
        </authorList>
    </citation>
    <scope>NUCLEOTIDE SEQUENCE [LARGE SCALE GENOMIC DNA]</scope>
    <source>
        <strain>SAFR-032</strain>
    </source>
</reference>
<feature type="chain" id="PRO_1000057633" description="DNA mismatch repair protein MutS">
    <location>
        <begin position="1"/>
        <end position="858"/>
    </location>
</feature>
<feature type="binding site" evidence="1">
    <location>
        <begin position="600"/>
        <end position="607"/>
    </location>
    <ligand>
        <name>ATP</name>
        <dbReference type="ChEBI" id="CHEBI:30616"/>
    </ligand>
</feature>